<sequence length="473" mass="52453">MFIVVVTIFENYTQWYSSLLTIFSLTIKRKLKTIRSMQDSTSKCTCTEHHMGGTICCCCRSDAEENEQLTSVILSRKPPPQEQCRGNLLVFINPNSGTGKSLETFANTVGPKLDKSLIRYEVVVTTGPNHARNVLMTKADLGKFNGVLILSGDGLVFEALNGILCREDAFRIFPTLPIGIVPSGSGNGLLCSVLSKYGTKMNEKSVMERALEIATSPTAKAESVALYSVKTDNQSYASFLSIGWGLMADIDIDSEKWRKSLGHHRFTVMGFIRSCNLRSYKGRLTYRPYKPKGFHPSSNVFSVYEKTTQQRIDDSKVKTNGSVSDSEEETMETKFQNWTLPDSDETLAVGSSDLEETVVIEDNFVNIYAVTLSHIAADGPFAPSAKLEDNRIHLSYILWKDIGTRVNIAKYLLAIEHETHLDLPFVKHVEVSSMKLEVISEGSHVVLDGEVVDTKTIEVASTKNHISVFSSTA</sequence>
<feature type="chain" id="PRO_0000421452" description="Sphingosine kinase 1">
    <location>
        <begin position="1"/>
        <end position="473"/>
    </location>
</feature>
<feature type="domain" description="DAGKc" evidence="3">
    <location>
        <begin position="83"/>
        <end position="233"/>
    </location>
</feature>
<feature type="active site" description="Proton donor/acceptor" evidence="2">
    <location>
        <position position="153"/>
    </location>
</feature>
<feature type="binding site" evidence="3">
    <location>
        <begin position="93"/>
        <end position="95"/>
    </location>
    <ligand>
        <name>ATP</name>
        <dbReference type="ChEBI" id="CHEBI:30616"/>
    </ligand>
</feature>
<feature type="binding site" evidence="3">
    <location>
        <begin position="125"/>
        <end position="129"/>
    </location>
    <ligand>
        <name>ATP</name>
        <dbReference type="ChEBI" id="CHEBI:30616"/>
    </ligand>
</feature>
<feature type="binding site" evidence="2">
    <location>
        <begin position="151"/>
        <end position="154"/>
    </location>
    <ligand>
        <name>substrate</name>
    </ligand>
</feature>
<feature type="binding site" evidence="3">
    <location>
        <position position="158"/>
    </location>
    <ligand>
        <name>ATP</name>
        <dbReference type="ChEBI" id="CHEBI:30616"/>
    </ligand>
</feature>
<feature type="binding site" evidence="3">
    <location>
        <begin position="184"/>
        <end position="186"/>
    </location>
    <ligand>
        <name>ATP</name>
        <dbReference type="ChEBI" id="CHEBI:30616"/>
    </ligand>
</feature>
<feature type="binding site" evidence="1">
    <location>
        <position position="251"/>
    </location>
    <ligand>
        <name>substrate</name>
    </ligand>
</feature>
<feature type="binding site" evidence="3">
    <location>
        <position position="258"/>
    </location>
    <ligand>
        <name>ATP</name>
        <dbReference type="ChEBI" id="CHEBI:30616"/>
    </ligand>
</feature>
<feature type="binding site" evidence="3">
    <location>
        <position position="265"/>
    </location>
    <ligand>
        <name>ATP</name>
        <dbReference type="ChEBI" id="CHEBI:30616"/>
    </ligand>
</feature>
<feature type="binding site" evidence="3">
    <location>
        <begin position="448"/>
        <end position="450"/>
    </location>
    <ligand>
        <name>ATP</name>
        <dbReference type="ChEBI" id="CHEBI:30616"/>
    </ligand>
</feature>
<feature type="splice variant" id="VSP_045720" description="In isoform d." evidence="8">
    <location>
        <begin position="1"/>
        <end position="135"/>
    </location>
</feature>
<feature type="splice variant" id="VSP_045721" description="In isoform c." evidence="8">
    <location>
        <begin position="1"/>
        <end position="79"/>
    </location>
</feature>
<feature type="splice variant" id="VSP_045722" description="In isoform b." evidence="8">
    <location>
        <begin position="1"/>
        <end position="50"/>
    </location>
</feature>
<feature type="splice variant" id="VSP_045723" description="In isoform c." evidence="8">
    <original>PQ</original>
    <variation>ME</variation>
    <location>
        <begin position="80"/>
        <end position="81"/>
    </location>
</feature>
<feature type="mutagenesis site" description="Impairs responsiveness to aldicarb, probably due to loss of kinase function." evidence="4">
    <original>SGDGL</original>
    <variation>AAAAA</variation>
    <location>
        <begin position="151"/>
        <end position="155"/>
    </location>
</feature>
<feature type="mutagenesis site" description="Impairs responsiveness to aldicarb, probably due to loss of kinase function." evidence="4">
    <original>GSGN</original>
    <variation>DDDD</variation>
    <location>
        <begin position="184"/>
        <end position="187"/>
    </location>
</feature>
<feature type="mutagenesis site" description="Disrupts location in axons. Loss of neurotransmission." evidence="6">
    <original>V</original>
    <variation>Q</variation>
    <location>
        <position position="268"/>
    </location>
</feature>
<feature type="mutagenesis site" description="Impairs translocation to the presynaptic membrane." evidence="4">
    <original>FI</original>
    <variation>AQ</variation>
    <location>
        <begin position="271"/>
        <end position="272"/>
    </location>
</feature>
<keyword id="KW-0025">Alternative splicing</keyword>
<keyword id="KW-0067">ATP-binding</keyword>
<keyword id="KW-1003">Cell membrane</keyword>
<keyword id="KW-0966">Cell projection</keyword>
<keyword id="KW-0418">Kinase</keyword>
<keyword id="KW-0443">Lipid metabolism</keyword>
<keyword id="KW-0472">Membrane</keyword>
<keyword id="KW-0496">Mitochondrion</keyword>
<keyword id="KW-0547">Nucleotide-binding</keyword>
<keyword id="KW-1185">Reference proteome</keyword>
<keyword id="KW-0746">Sphingolipid metabolism</keyword>
<keyword id="KW-0770">Synapse</keyword>
<keyword id="KW-0808">Transferase</keyword>
<gene>
    <name type="primary">sphk-1</name>
    <name type="synonym">tag-274</name>
    <name type="ORF">C34C6.5</name>
</gene>
<name>SPHK1_CAEEL</name>
<accession>Q18425</accession>
<accession>D2Y8W1</accession>
<accession>H9G2Q9</accession>
<accession>Q7JM91</accession>
<evidence type="ECO:0000250" key="1"/>
<evidence type="ECO:0000250" key="2">
    <source>
        <dbReference type="UniProtKB" id="Q9NYA1"/>
    </source>
</evidence>
<evidence type="ECO:0000255" key="3">
    <source>
        <dbReference type="PROSITE-ProRule" id="PRU00783"/>
    </source>
</evidence>
<evidence type="ECO:0000269" key="4">
    <source>
    </source>
</evidence>
<evidence type="ECO:0000269" key="5">
    <source>
    </source>
</evidence>
<evidence type="ECO:0000269" key="6">
    <source>
    </source>
</evidence>
<evidence type="ECO:0000269" key="7">
    <source>
    </source>
</evidence>
<evidence type="ECO:0000305" key="8"/>
<evidence type="ECO:0000305" key="9">
    <source>
    </source>
</evidence>
<dbReference type="EC" id="2.7.1.91" evidence="8"/>
<dbReference type="EMBL" id="Z66494">
    <property type="protein sequence ID" value="CAA91259.1"/>
    <property type="molecule type" value="Genomic_DNA"/>
</dbReference>
<dbReference type="EMBL" id="Z66494">
    <property type="protein sequence ID" value="CAE48497.1"/>
    <property type="molecule type" value="Genomic_DNA"/>
</dbReference>
<dbReference type="EMBL" id="Z66494">
    <property type="protein sequence ID" value="CBI83226.1"/>
    <property type="molecule type" value="Genomic_DNA"/>
</dbReference>
<dbReference type="EMBL" id="Z66494">
    <property type="protein sequence ID" value="CCG28273.1"/>
    <property type="molecule type" value="Genomic_DNA"/>
</dbReference>
<dbReference type="PIR" id="T19707">
    <property type="entry name" value="T19707"/>
</dbReference>
<dbReference type="RefSeq" id="NP_001022017.1">
    <molecule id="Q18425-1"/>
    <property type="nucleotide sequence ID" value="NM_001026846.4"/>
</dbReference>
<dbReference type="RefSeq" id="NP_001022018.1">
    <property type="nucleotide sequence ID" value="NM_001026847.4"/>
</dbReference>
<dbReference type="RefSeq" id="NP_001254179.1">
    <molecule id="Q18425-3"/>
    <property type="nucleotide sequence ID" value="NM_001267250.2"/>
</dbReference>
<dbReference type="RefSeq" id="NP_001254180.1">
    <molecule id="Q18425-4"/>
    <property type="nucleotide sequence ID" value="NM_001267251.3"/>
</dbReference>
<dbReference type="RefSeq" id="NP_001367075.1">
    <molecule id="Q18425-2"/>
    <property type="nucleotide sequence ID" value="NM_001381535.1"/>
</dbReference>
<dbReference type="SMR" id="Q18425"/>
<dbReference type="FunCoup" id="Q18425">
    <property type="interactions" value="1533"/>
</dbReference>
<dbReference type="STRING" id="6239.C34C6.5a.1"/>
<dbReference type="PaxDb" id="6239-C34C6.5a"/>
<dbReference type="PeptideAtlas" id="Q18425"/>
<dbReference type="EnsemblMetazoa" id="C34C6.5a.1">
    <molecule id="Q18425-1"/>
    <property type="protein sequence ID" value="C34C6.5a.1"/>
    <property type="gene ID" value="WBGene00007918"/>
</dbReference>
<dbReference type="EnsemblMetazoa" id="C34C6.5b.1">
    <molecule id="Q18425-2"/>
    <property type="protein sequence ID" value="C34C6.5b.1"/>
    <property type="gene ID" value="WBGene00007918"/>
</dbReference>
<dbReference type="EnsemblMetazoa" id="C34C6.5c.1">
    <molecule id="Q18425-3"/>
    <property type="protein sequence ID" value="C34C6.5c.1"/>
    <property type="gene ID" value="WBGene00007918"/>
</dbReference>
<dbReference type="EnsemblMetazoa" id="C34C6.5d.1">
    <molecule id="Q18425-4"/>
    <property type="protein sequence ID" value="C34C6.5d.1"/>
    <property type="gene ID" value="WBGene00007918"/>
</dbReference>
<dbReference type="GeneID" id="183197"/>
<dbReference type="KEGG" id="cel:CELE_C34C6.5"/>
<dbReference type="UCSC" id="C34C6.5b.1">
    <property type="organism name" value="c. elegans"/>
</dbReference>
<dbReference type="AGR" id="WB:WBGene00007918"/>
<dbReference type="CTD" id="183197"/>
<dbReference type="WormBase" id="C34C6.5a">
    <molecule id="Q18425-1"/>
    <property type="protein sequence ID" value="CE03053"/>
    <property type="gene ID" value="WBGene00007918"/>
    <property type="gene designation" value="sphk-1"/>
</dbReference>
<dbReference type="WormBase" id="C34C6.5b">
    <molecule id="Q18425-2"/>
    <property type="protein sequence ID" value="CE35833"/>
    <property type="gene ID" value="WBGene00007918"/>
    <property type="gene designation" value="sphk-1"/>
</dbReference>
<dbReference type="WormBase" id="C34C6.5c">
    <molecule id="Q18425-3"/>
    <property type="protein sequence ID" value="CE44377"/>
    <property type="gene ID" value="WBGene00007918"/>
    <property type="gene designation" value="sphk-1"/>
</dbReference>
<dbReference type="WormBase" id="C34C6.5d">
    <molecule id="Q18425-4"/>
    <property type="protein sequence ID" value="CE47276"/>
    <property type="gene ID" value="WBGene00007918"/>
    <property type="gene designation" value="sphk-1"/>
</dbReference>
<dbReference type="eggNOG" id="KOG1116">
    <property type="taxonomic scope" value="Eukaryota"/>
</dbReference>
<dbReference type="GeneTree" id="ENSGT00940000167991"/>
<dbReference type="InParanoid" id="Q18425"/>
<dbReference type="OMA" id="QAWSRRI"/>
<dbReference type="OrthoDB" id="3853857at2759"/>
<dbReference type="PhylomeDB" id="Q18425"/>
<dbReference type="Reactome" id="R-CEL-1660661">
    <property type="pathway name" value="Sphingolipid de novo biosynthesis"/>
</dbReference>
<dbReference type="Reactome" id="R-CEL-390471">
    <property type="pathway name" value="Association of TriC/CCT with target proteins during biosynthesis"/>
</dbReference>
<dbReference type="Reactome" id="R-CEL-5218921">
    <property type="pathway name" value="VEGFR2 mediated cell proliferation"/>
</dbReference>
<dbReference type="Reactome" id="R-CEL-9009391">
    <property type="pathway name" value="Extra-nuclear estrogen signaling"/>
</dbReference>
<dbReference type="Reactome" id="R-CEL-9833482">
    <property type="pathway name" value="PKR-mediated signaling"/>
</dbReference>
<dbReference type="UniPathway" id="UPA00222"/>
<dbReference type="PRO" id="PR:Q18425"/>
<dbReference type="Proteomes" id="UP000001940">
    <property type="component" value="Chromosome II"/>
</dbReference>
<dbReference type="Bgee" id="WBGene00007918">
    <property type="expression patterns" value="Expressed in pharyngeal muscle cell (C elegans) and 4 other cell types or tissues"/>
</dbReference>
<dbReference type="GO" id="GO:0030424">
    <property type="term" value="C:axon"/>
    <property type="evidence" value="ECO:0000314"/>
    <property type="project" value="UniProtKB"/>
</dbReference>
<dbReference type="GO" id="GO:0005737">
    <property type="term" value="C:cytoplasm"/>
    <property type="evidence" value="ECO:0000250"/>
    <property type="project" value="UniProtKB"/>
</dbReference>
<dbReference type="GO" id="GO:0043231">
    <property type="term" value="C:intracellular membrane-bounded organelle"/>
    <property type="evidence" value="ECO:0000318"/>
    <property type="project" value="GO_Central"/>
</dbReference>
<dbReference type="GO" id="GO:0016020">
    <property type="term" value="C:membrane"/>
    <property type="evidence" value="ECO:0000318"/>
    <property type="project" value="GO_Central"/>
</dbReference>
<dbReference type="GO" id="GO:0031966">
    <property type="term" value="C:mitochondrial membrane"/>
    <property type="evidence" value="ECO:0007669"/>
    <property type="project" value="UniProtKB-SubCell"/>
</dbReference>
<dbReference type="GO" id="GO:0005739">
    <property type="term" value="C:mitochondrion"/>
    <property type="evidence" value="ECO:0000314"/>
    <property type="project" value="WormBase"/>
</dbReference>
<dbReference type="GO" id="GO:0043025">
    <property type="term" value="C:neuronal cell body"/>
    <property type="evidence" value="ECO:0000314"/>
    <property type="project" value="WormBase"/>
</dbReference>
<dbReference type="GO" id="GO:0005634">
    <property type="term" value="C:nucleus"/>
    <property type="evidence" value="ECO:0000250"/>
    <property type="project" value="UniProtKB"/>
</dbReference>
<dbReference type="GO" id="GO:0043204">
    <property type="term" value="C:perikaryon"/>
    <property type="evidence" value="ECO:0007669"/>
    <property type="project" value="UniProtKB-SubCell"/>
</dbReference>
<dbReference type="GO" id="GO:0036062">
    <property type="term" value="C:presynaptic periactive zone"/>
    <property type="evidence" value="ECO:0000314"/>
    <property type="project" value="WormBase"/>
</dbReference>
<dbReference type="GO" id="GO:0016407">
    <property type="term" value="F:acetyltransferase activity"/>
    <property type="evidence" value="ECO:0000250"/>
    <property type="project" value="UniProtKB"/>
</dbReference>
<dbReference type="GO" id="GO:0005524">
    <property type="term" value="F:ATP binding"/>
    <property type="evidence" value="ECO:0007669"/>
    <property type="project" value="UniProtKB-KW"/>
</dbReference>
<dbReference type="GO" id="GO:0017050">
    <property type="term" value="F:D-erythro-sphingosine kinase activity"/>
    <property type="evidence" value="ECO:0000250"/>
    <property type="project" value="UniProtKB"/>
</dbReference>
<dbReference type="GO" id="GO:0046834">
    <property type="term" value="P:lipid phosphorylation"/>
    <property type="evidence" value="ECO:0000250"/>
    <property type="project" value="WormBase"/>
</dbReference>
<dbReference type="GO" id="GO:0034514">
    <property type="term" value="P:mitochondrial unfolded protein response"/>
    <property type="evidence" value="ECO:0000314"/>
    <property type="project" value="WormBase"/>
</dbReference>
<dbReference type="GO" id="GO:0014057">
    <property type="term" value="P:positive regulation of acetylcholine secretion, neurotransmission"/>
    <property type="evidence" value="ECO:0000315"/>
    <property type="project" value="WormBase"/>
</dbReference>
<dbReference type="GO" id="GO:0006473">
    <property type="term" value="P:protein acetylation"/>
    <property type="evidence" value="ECO:0000250"/>
    <property type="project" value="UniProtKB"/>
</dbReference>
<dbReference type="GO" id="GO:0040012">
    <property type="term" value="P:regulation of locomotion"/>
    <property type="evidence" value="ECO:0000315"/>
    <property type="project" value="WormBase"/>
</dbReference>
<dbReference type="GO" id="GO:0050764">
    <property type="term" value="P:regulation of phagocytosis"/>
    <property type="evidence" value="ECO:0000250"/>
    <property type="project" value="UniProtKB"/>
</dbReference>
<dbReference type="GO" id="GO:0046512">
    <property type="term" value="P:sphingosine biosynthetic process"/>
    <property type="evidence" value="ECO:0000318"/>
    <property type="project" value="GO_Central"/>
</dbReference>
<dbReference type="Gene3D" id="2.60.200.40">
    <property type="match status" value="1"/>
</dbReference>
<dbReference type="Gene3D" id="3.40.50.10330">
    <property type="entry name" value="Probable inorganic polyphosphate/atp-NAD kinase, domain 1"/>
    <property type="match status" value="1"/>
</dbReference>
<dbReference type="InterPro" id="IPR017438">
    <property type="entry name" value="ATP-NAD_kinase_N"/>
</dbReference>
<dbReference type="InterPro" id="IPR001206">
    <property type="entry name" value="Diacylglycerol_kinase_cat_dom"/>
</dbReference>
<dbReference type="InterPro" id="IPR050187">
    <property type="entry name" value="Lipid_Phosphate_FormReg"/>
</dbReference>
<dbReference type="InterPro" id="IPR016064">
    <property type="entry name" value="NAD/diacylglycerol_kinase_sf"/>
</dbReference>
<dbReference type="PANTHER" id="PTHR12358:SF112">
    <property type="entry name" value="LD11247P-RELATED"/>
    <property type="match status" value="1"/>
</dbReference>
<dbReference type="PANTHER" id="PTHR12358">
    <property type="entry name" value="SPHINGOSINE KINASE"/>
    <property type="match status" value="1"/>
</dbReference>
<dbReference type="Pfam" id="PF00781">
    <property type="entry name" value="DAGK_cat"/>
    <property type="match status" value="1"/>
</dbReference>
<dbReference type="SMART" id="SM00046">
    <property type="entry name" value="DAGKc"/>
    <property type="match status" value="1"/>
</dbReference>
<dbReference type="SUPFAM" id="SSF111331">
    <property type="entry name" value="NAD kinase/diacylglycerol kinase-like"/>
    <property type="match status" value="1"/>
</dbReference>
<dbReference type="PROSITE" id="PS50146">
    <property type="entry name" value="DAGK"/>
    <property type="match status" value="1"/>
</dbReference>
<comment type="function">
    <text evidence="2 4 5 7 9">Catalyzes the phosphorylation of sphingoid bases to form sphingoid 1-phosphate (SPP), which have both intra- and extracellular functions (By similarity). C.elegans contain specific sphingoid bases, which are unique or different in structure compared to the sphingoid bases found in other animals. Two examples of these distinctive compounds are: 15-methylhexadecasphinganine and 15-methylhexadecasphing-4-enine (PubMed:30155209). Required for neurotransmitter release from neuromuscular junctions. Acts by recruiting the synaptic vesicle priming protein unc-13 to synapses (Probable) (PubMed:22588719, PubMed:23223309).</text>
</comment>
<comment type="catalytic activity">
    <reaction evidence="2">
        <text>a sphingoid base + ATP = a sphingoid 1-phosphate + ADP + H(+)</text>
        <dbReference type="Rhea" id="RHEA:51496"/>
        <dbReference type="ChEBI" id="CHEBI:15378"/>
        <dbReference type="ChEBI" id="CHEBI:30616"/>
        <dbReference type="ChEBI" id="CHEBI:76941"/>
        <dbReference type="ChEBI" id="CHEBI:84410"/>
        <dbReference type="ChEBI" id="CHEBI:456216"/>
        <dbReference type="EC" id="2.7.1.91"/>
    </reaction>
    <physiologicalReaction direction="left-to-right" evidence="2">
        <dbReference type="Rhea" id="RHEA:51497"/>
    </physiologicalReaction>
</comment>
<comment type="catalytic activity">
    <reaction evidence="8">
        <text>15-methylhexadecasphing-4-enine + ATP = 15-methylhexadecasphing-4-enine 1-phosphate + ADP + H(+)</text>
        <dbReference type="Rhea" id="RHEA:34715"/>
        <dbReference type="ChEBI" id="CHEBI:15378"/>
        <dbReference type="ChEBI" id="CHEBI:30616"/>
        <dbReference type="ChEBI" id="CHEBI:70771"/>
        <dbReference type="ChEBI" id="CHEBI:70991"/>
        <dbReference type="ChEBI" id="CHEBI:456216"/>
    </reaction>
    <physiologicalReaction direction="left-to-right" evidence="8">
        <dbReference type="Rhea" id="RHEA:34716"/>
    </physiologicalReaction>
</comment>
<comment type="catalytic activity">
    <reaction evidence="8">
        <text>15-methylhexadecasphinganine + ATP = 15-methylhexadecasphinganine 1-phosphate + ADP + H(+)</text>
        <dbReference type="Rhea" id="RHEA:34747"/>
        <dbReference type="ChEBI" id="CHEBI:15378"/>
        <dbReference type="ChEBI" id="CHEBI:30616"/>
        <dbReference type="ChEBI" id="CHEBI:70829"/>
        <dbReference type="ChEBI" id="CHEBI:71030"/>
        <dbReference type="ChEBI" id="CHEBI:456216"/>
    </reaction>
    <physiologicalReaction direction="left-to-right" evidence="8">
        <dbReference type="Rhea" id="RHEA:34748"/>
    </physiologicalReaction>
</comment>
<comment type="cofactor">
    <cofactor evidence="1">
        <name>Mg(2+)</name>
        <dbReference type="ChEBI" id="CHEBI:18420"/>
    </cofactor>
</comment>
<comment type="pathway">
    <text>Lipid metabolism; sphingolipid metabolism.</text>
</comment>
<comment type="subcellular location">
    <subcellularLocation>
        <location evidence="4 5">Presynaptic cell membrane</location>
    </subcellularLocation>
    <subcellularLocation>
        <location evidence="6">Cell projection</location>
        <location evidence="6">Axon</location>
    </subcellularLocation>
    <subcellularLocation>
        <location>Perikaryon</location>
    </subcellularLocation>
    <subcellularLocation>
        <location>Mitochondrion membrane</location>
    </subcellularLocation>
    <text evidence="4 5">Recruitment to the presynaptic membrane may be regulated by endogenous acetylcholine, which activates a muscarinic signaling pathway acting through gar-3, egl-30 and unc-73. Muscarinic-mediated recruitment of sphk-1 to presynaptic terminals requires calcium influx and the calcium-binding protein calm-1. Primarily observed on the outer surface of mitochondria in body wall muscles.</text>
</comment>
<comment type="alternative products">
    <event type="alternative splicing"/>
    <isoform>
        <id>Q18425-1</id>
        <name>a</name>
        <sequence type="displayed"/>
    </isoform>
    <isoform>
        <id>Q18425-2</id>
        <name>b</name>
        <sequence type="described" ref="VSP_045722"/>
    </isoform>
    <isoform>
        <id>Q18425-3</id>
        <name>c</name>
        <sequence type="described" ref="VSP_045721 VSP_045723"/>
    </isoform>
    <isoform>
        <id>Q18425-4</id>
        <name>d</name>
        <sequence type="described" ref="VSP_045720"/>
    </isoform>
</comment>
<comment type="tissue specificity">
    <text evidence="4 5">Expressed in the majority of cholinergic and GABAergic neurons, body wall muscle, excretory canal cells, intestine, and hypodermis.</text>
</comment>
<organism>
    <name type="scientific">Caenorhabditis elegans</name>
    <dbReference type="NCBI Taxonomy" id="6239"/>
    <lineage>
        <taxon>Eukaryota</taxon>
        <taxon>Metazoa</taxon>
        <taxon>Ecdysozoa</taxon>
        <taxon>Nematoda</taxon>
        <taxon>Chromadorea</taxon>
        <taxon>Rhabditida</taxon>
        <taxon>Rhabditina</taxon>
        <taxon>Rhabditomorpha</taxon>
        <taxon>Rhabditoidea</taxon>
        <taxon>Rhabditidae</taxon>
        <taxon>Peloderinae</taxon>
        <taxon>Caenorhabditis</taxon>
    </lineage>
</organism>
<protein>
    <recommendedName>
        <fullName>Sphingosine kinase 1</fullName>
        <ecNumber evidence="8">2.7.1.91</ecNumber>
    </recommendedName>
</protein>
<reference key="1">
    <citation type="journal article" date="1998" name="Science">
        <title>Genome sequence of the nematode C. elegans: a platform for investigating biology.</title>
        <authorList>
            <consortium name="The C. elegans sequencing consortium"/>
        </authorList>
    </citation>
    <scope>NUCLEOTIDE SEQUENCE [LARGE SCALE GENOMIC DNA]</scope>
    <scope>ALTERNATIVE SPLICING</scope>
    <source>
        <strain>Bristol N2</strain>
    </source>
</reference>
<reference key="2">
    <citation type="journal article" date="2012" name="Genes Dev.">
        <title>Recruitment of sphingosine kinase to presynaptic terminals by a conserved muscarinic signaling pathway promotes neurotransmitter release.</title>
        <authorList>
            <person name="Chan J.P."/>
            <person name="Hu Z."/>
            <person name="Sieburth D."/>
        </authorList>
    </citation>
    <scope>FUNCTION</scope>
    <scope>SUBCELLULAR LOCATION</scope>
    <scope>TISSUE SPECIFICITY</scope>
    <scope>MUTAGENESIS OF 151-SER--LEU-155; 184-GLY--ASN-187 AND 271-PHE-ILE-272</scope>
</reference>
<reference key="3">
    <citation type="journal article" date="2012" name="J. Neurosci.">
        <title>Localized sphingolipid signaling at presynaptic terminals is regulated by calcium influx and promotes recruitment of priming factors.</title>
        <authorList>
            <person name="Chan J.P."/>
            <person name="Sieburth D."/>
        </authorList>
    </citation>
    <scope>FUNCTION</scope>
    <scope>SUBCELLULAR LOCATION</scope>
    <scope>TISSUE SPECIFICITY</scope>
</reference>
<reference key="4">
    <citation type="journal article" date="2014" name="Nat. Cell Biol.">
        <title>Coupling between endocytosis and sphingosine kinase 1 recruitment.</title>
        <authorList>
            <person name="Shen H."/>
            <person name="Giordano F."/>
            <person name="Wu Y."/>
            <person name="Chan J."/>
            <person name="Zhu C."/>
            <person name="Milosevic I."/>
            <person name="Wu X."/>
            <person name="Yao K."/>
            <person name="Chen B."/>
            <person name="Baumgart T."/>
            <person name="Sieburth D."/>
            <person name="De Camilli P."/>
        </authorList>
    </citation>
    <scope>SUBCELLULAR LOCATION</scope>
    <scope>MUTAGENESIS OF VAL-268</scope>
</reference>
<reference key="5">
    <citation type="journal article" date="2017" name="Chem. Sci.">
        <title>Structure and conserved function of iso-branched sphingoid bases from the nematode Caenorhabditis elegans.</title>
        <authorList>
            <person name="Hannich J.T."/>
            <person name="Mellal D."/>
            <person name="Feng S."/>
            <person name="Zumbuehl A."/>
            <person name="Riezman H."/>
        </authorList>
    </citation>
    <scope>FUNCTION</scope>
</reference>
<proteinExistence type="evidence at protein level"/>